<comment type="function">
    <text evidence="1">GTPase that plays an essential role in the late steps of ribosome biogenesis.</text>
</comment>
<comment type="subunit">
    <text evidence="1">Associates with the 50S ribosomal subunit.</text>
</comment>
<comment type="similarity">
    <text evidence="1">Belongs to the TRAFAC class TrmE-Era-EngA-EngB-Septin-like GTPase superfamily. EngA (Der) GTPase family.</text>
</comment>
<dbReference type="EMBL" id="CP000730">
    <property type="protein sequence ID" value="ABX29422.1"/>
    <property type="molecule type" value="Genomic_DNA"/>
</dbReference>
<dbReference type="RefSeq" id="WP_000165536.1">
    <property type="nucleotide sequence ID" value="NC_010079.1"/>
</dbReference>
<dbReference type="SMR" id="A8Z454"/>
<dbReference type="KEGG" id="sax:USA300HOU_1412"/>
<dbReference type="HOGENOM" id="CLU_016077_6_2_9"/>
<dbReference type="GO" id="GO:0005525">
    <property type="term" value="F:GTP binding"/>
    <property type="evidence" value="ECO:0007669"/>
    <property type="project" value="UniProtKB-UniRule"/>
</dbReference>
<dbReference type="GO" id="GO:0043022">
    <property type="term" value="F:ribosome binding"/>
    <property type="evidence" value="ECO:0007669"/>
    <property type="project" value="TreeGrafter"/>
</dbReference>
<dbReference type="GO" id="GO:0042254">
    <property type="term" value="P:ribosome biogenesis"/>
    <property type="evidence" value="ECO:0007669"/>
    <property type="project" value="UniProtKB-KW"/>
</dbReference>
<dbReference type="CDD" id="cd01894">
    <property type="entry name" value="EngA1"/>
    <property type="match status" value="1"/>
</dbReference>
<dbReference type="CDD" id="cd01895">
    <property type="entry name" value="EngA2"/>
    <property type="match status" value="1"/>
</dbReference>
<dbReference type="FunFam" id="3.30.300.20:FF:000004">
    <property type="entry name" value="GTPase Der"/>
    <property type="match status" value="1"/>
</dbReference>
<dbReference type="FunFam" id="3.40.50.300:FF:000040">
    <property type="entry name" value="GTPase Der"/>
    <property type="match status" value="1"/>
</dbReference>
<dbReference type="FunFam" id="3.40.50.300:FF:000057">
    <property type="entry name" value="GTPase Der"/>
    <property type="match status" value="1"/>
</dbReference>
<dbReference type="Gene3D" id="3.30.300.20">
    <property type="match status" value="1"/>
</dbReference>
<dbReference type="Gene3D" id="3.40.50.300">
    <property type="entry name" value="P-loop containing nucleotide triphosphate hydrolases"/>
    <property type="match status" value="2"/>
</dbReference>
<dbReference type="HAMAP" id="MF_00195">
    <property type="entry name" value="GTPase_Der"/>
    <property type="match status" value="1"/>
</dbReference>
<dbReference type="InterPro" id="IPR031166">
    <property type="entry name" value="G_ENGA"/>
</dbReference>
<dbReference type="InterPro" id="IPR006073">
    <property type="entry name" value="GTP-bd"/>
</dbReference>
<dbReference type="InterPro" id="IPR016484">
    <property type="entry name" value="GTPase_Der"/>
</dbReference>
<dbReference type="InterPro" id="IPR032859">
    <property type="entry name" value="KH_dom-like"/>
</dbReference>
<dbReference type="InterPro" id="IPR015946">
    <property type="entry name" value="KH_dom-like_a/b"/>
</dbReference>
<dbReference type="InterPro" id="IPR027417">
    <property type="entry name" value="P-loop_NTPase"/>
</dbReference>
<dbReference type="InterPro" id="IPR005225">
    <property type="entry name" value="Small_GTP-bd"/>
</dbReference>
<dbReference type="NCBIfam" id="TIGR03594">
    <property type="entry name" value="GTPase_EngA"/>
    <property type="match status" value="1"/>
</dbReference>
<dbReference type="NCBIfam" id="TIGR00231">
    <property type="entry name" value="small_GTP"/>
    <property type="match status" value="2"/>
</dbReference>
<dbReference type="PANTHER" id="PTHR43834">
    <property type="entry name" value="GTPASE DER"/>
    <property type="match status" value="1"/>
</dbReference>
<dbReference type="PANTHER" id="PTHR43834:SF6">
    <property type="entry name" value="GTPASE DER"/>
    <property type="match status" value="1"/>
</dbReference>
<dbReference type="Pfam" id="PF14714">
    <property type="entry name" value="KH_dom-like"/>
    <property type="match status" value="1"/>
</dbReference>
<dbReference type="Pfam" id="PF01926">
    <property type="entry name" value="MMR_HSR1"/>
    <property type="match status" value="2"/>
</dbReference>
<dbReference type="PIRSF" id="PIRSF006485">
    <property type="entry name" value="GTP-binding_EngA"/>
    <property type="match status" value="1"/>
</dbReference>
<dbReference type="PRINTS" id="PR00326">
    <property type="entry name" value="GTP1OBG"/>
</dbReference>
<dbReference type="SUPFAM" id="SSF52540">
    <property type="entry name" value="P-loop containing nucleoside triphosphate hydrolases"/>
    <property type="match status" value="2"/>
</dbReference>
<dbReference type="PROSITE" id="PS51712">
    <property type="entry name" value="G_ENGA"/>
    <property type="match status" value="2"/>
</dbReference>
<gene>
    <name evidence="1" type="primary">der</name>
    <name type="synonym">engA</name>
    <name type="ordered locus">USA300HOU_1412</name>
</gene>
<evidence type="ECO:0000255" key="1">
    <source>
        <dbReference type="HAMAP-Rule" id="MF_00195"/>
    </source>
</evidence>
<feature type="chain" id="PRO_1000077678" description="GTPase Der">
    <location>
        <begin position="1"/>
        <end position="436"/>
    </location>
</feature>
<feature type="domain" description="EngA-type G 1">
    <location>
        <begin position="4"/>
        <end position="167"/>
    </location>
</feature>
<feature type="domain" description="EngA-type G 2">
    <location>
        <begin position="176"/>
        <end position="351"/>
    </location>
</feature>
<feature type="domain" description="KH-like" evidence="1">
    <location>
        <begin position="352"/>
        <end position="436"/>
    </location>
</feature>
<feature type="binding site" evidence="1">
    <location>
        <begin position="10"/>
        <end position="17"/>
    </location>
    <ligand>
        <name>GTP</name>
        <dbReference type="ChEBI" id="CHEBI:37565"/>
        <label>1</label>
    </ligand>
</feature>
<feature type="binding site" evidence="1">
    <location>
        <begin position="57"/>
        <end position="61"/>
    </location>
    <ligand>
        <name>GTP</name>
        <dbReference type="ChEBI" id="CHEBI:37565"/>
        <label>1</label>
    </ligand>
</feature>
<feature type="binding site" evidence="1">
    <location>
        <begin position="119"/>
        <end position="122"/>
    </location>
    <ligand>
        <name>GTP</name>
        <dbReference type="ChEBI" id="CHEBI:37565"/>
        <label>1</label>
    </ligand>
</feature>
<feature type="binding site" evidence="1">
    <location>
        <begin position="182"/>
        <end position="189"/>
    </location>
    <ligand>
        <name>GTP</name>
        <dbReference type="ChEBI" id="CHEBI:37565"/>
        <label>2</label>
    </ligand>
</feature>
<feature type="binding site" evidence="1">
    <location>
        <begin position="229"/>
        <end position="233"/>
    </location>
    <ligand>
        <name>GTP</name>
        <dbReference type="ChEBI" id="CHEBI:37565"/>
        <label>2</label>
    </ligand>
</feature>
<feature type="binding site" evidence="1">
    <location>
        <begin position="294"/>
        <end position="297"/>
    </location>
    <ligand>
        <name>GTP</name>
        <dbReference type="ChEBI" id="CHEBI:37565"/>
        <label>2</label>
    </ligand>
</feature>
<keyword id="KW-0342">GTP-binding</keyword>
<keyword id="KW-0547">Nucleotide-binding</keyword>
<keyword id="KW-0677">Repeat</keyword>
<keyword id="KW-0690">Ribosome biogenesis</keyword>
<proteinExistence type="inferred from homology"/>
<sequence>MTKPIVAIVGRPNVGKSTIFNRIVGERVSIVEDTPGVTRDRIYSSGEWLTHDFNIIDTGGIEIGDAPFQTQIRAQAEIAIDEAYVIIFMVNVREGLTQSDEMVAQILYKSKKPVVLAVNKVDNMEMRTDVYDFYSLGFGEPYPISGSHGLGLGDLLDAVVSHFGEEEEDPYDEDTIRLSIIGRPNVGKSSLVNAILGEDRVIVSNVAGTTRDAIDTEYSYDGQDYVLIDTAGMRKKGKVYESTEKYSVLRALKAIERSNVVLVVIDAEQGIIEQDKRVAGYAHEQGKAVVIVVNKWDTVEKDSKTMKKFEDEVRKEFQFLDYAQIAFVSAKERTRLRTLFPYINEASENHKKRVQSSTLNEVVTGAISMNPTPTDKGRRLNVFYATQVAIEPPTFVVFVNDVELMHFSYKRYLENQIRAAFGFEGTPIHIIARKRN</sequence>
<reference key="1">
    <citation type="journal article" date="2007" name="BMC Microbiol.">
        <title>Subtle genetic changes enhance virulence of methicillin resistant and sensitive Staphylococcus aureus.</title>
        <authorList>
            <person name="Highlander S.K."/>
            <person name="Hulten K.G."/>
            <person name="Qin X."/>
            <person name="Jiang H."/>
            <person name="Yerrapragada S."/>
            <person name="Mason E.O. Jr."/>
            <person name="Shang Y."/>
            <person name="Williams T.M."/>
            <person name="Fortunov R.M."/>
            <person name="Liu Y."/>
            <person name="Igboeli O."/>
            <person name="Petrosino J."/>
            <person name="Tirumalai M."/>
            <person name="Uzman A."/>
            <person name="Fox G.E."/>
            <person name="Cardenas A.M."/>
            <person name="Muzny D.M."/>
            <person name="Hemphill L."/>
            <person name="Ding Y."/>
            <person name="Dugan S."/>
            <person name="Blyth P.R."/>
            <person name="Buhay C.J."/>
            <person name="Dinh H.H."/>
            <person name="Hawes A.C."/>
            <person name="Holder M."/>
            <person name="Kovar C.L."/>
            <person name="Lee S.L."/>
            <person name="Liu W."/>
            <person name="Nazareth L.V."/>
            <person name="Wang Q."/>
            <person name="Zhou J."/>
            <person name="Kaplan S.L."/>
            <person name="Weinstock G.M."/>
        </authorList>
    </citation>
    <scope>NUCLEOTIDE SEQUENCE [LARGE SCALE GENOMIC DNA]</scope>
    <source>
        <strain>USA300 / TCH1516</strain>
    </source>
</reference>
<name>DER_STAAT</name>
<protein>
    <recommendedName>
        <fullName evidence="1">GTPase Der</fullName>
    </recommendedName>
    <alternativeName>
        <fullName evidence="1">GTP-binding protein EngA</fullName>
    </alternativeName>
</protein>
<organism>
    <name type="scientific">Staphylococcus aureus (strain USA300 / TCH1516)</name>
    <dbReference type="NCBI Taxonomy" id="451516"/>
    <lineage>
        <taxon>Bacteria</taxon>
        <taxon>Bacillati</taxon>
        <taxon>Bacillota</taxon>
        <taxon>Bacilli</taxon>
        <taxon>Bacillales</taxon>
        <taxon>Staphylococcaceae</taxon>
        <taxon>Staphylococcus</taxon>
    </lineage>
</organism>
<accession>A8Z454</accession>